<comment type="function">
    <text evidence="2">GTP hydrolase that promotes the GTP-dependent binding of aminoacyl-tRNA to the A-site of ribosomes during protein biosynthesis.</text>
</comment>
<comment type="catalytic activity">
    <reaction evidence="2">
        <text>GTP + H2O = GDP + phosphate + H(+)</text>
        <dbReference type="Rhea" id="RHEA:19669"/>
        <dbReference type="ChEBI" id="CHEBI:15377"/>
        <dbReference type="ChEBI" id="CHEBI:15378"/>
        <dbReference type="ChEBI" id="CHEBI:37565"/>
        <dbReference type="ChEBI" id="CHEBI:43474"/>
        <dbReference type="ChEBI" id="CHEBI:58189"/>
        <dbReference type="EC" id="3.6.5.3"/>
    </reaction>
    <physiologicalReaction direction="left-to-right" evidence="2">
        <dbReference type="Rhea" id="RHEA:19670"/>
    </physiologicalReaction>
</comment>
<comment type="subunit">
    <text evidence="2">Monomer.</text>
</comment>
<comment type="subcellular location">
    <subcellularLocation>
        <location evidence="2">Cytoplasm</location>
    </subcellularLocation>
</comment>
<comment type="similarity">
    <text evidence="2">Belongs to the TRAFAC class translation factor GTPase superfamily. Classic translation factor GTPase family. EF-Tu/EF-1A subfamily.</text>
</comment>
<gene>
    <name evidence="2" type="primary">tuf3</name>
</gene>
<reference key="1">
    <citation type="journal article" date="1994" name="Microbiology">
        <title>Three tuf-like genes in the kirromycin producer Streptomyces ramocissimus.</title>
        <authorList>
            <person name="Vijgenboom E."/>
            <person name="Woudt L.P."/>
            <person name="Heinstra P.W.H."/>
            <person name="Rietveld K."/>
            <person name="van Haarlem J."/>
            <person name="van Wezel G.P."/>
            <person name="Shochat S."/>
            <person name="Bosch L."/>
        </authorList>
    </citation>
    <scope>NUCLEOTIDE SEQUENCE [GENOMIC DNA]</scope>
</reference>
<protein>
    <recommendedName>
        <fullName evidence="2">Elongation factor Tu-3</fullName>
        <shortName evidence="2">EF-Tu-3</shortName>
        <ecNumber evidence="2">3.6.5.3</ecNumber>
    </recommendedName>
</protein>
<organism>
    <name type="scientific">Streptomyces ramocissimus</name>
    <dbReference type="NCBI Taxonomy" id="1925"/>
    <lineage>
        <taxon>Bacteria</taxon>
        <taxon>Bacillati</taxon>
        <taxon>Actinomycetota</taxon>
        <taxon>Actinomycetes</taxon>
        <taxon>Kitasatosporales</taxon>
        <taxon>Streptomycetaceae</taxon>
        <taxon>Streptomyces</taxon>
    </lineage>
</organism>
<name>EFTU3_STRRA</name>
<feature type="chain" id="PRO_0000091415" description="Elongation factor Tu-3">
    <location>
        <begin position="1"/>
        <end position="389"/>
    </location>
</feature>
<feature type="domain" description="tr-type G">
    <location>
        <begin position="10"/>
        <end position="203"/>
    </location>
</feature>
<feature type="region of interest" description="G1" evidence="1">
    <location>
        <begin position="19"/>
        <end position="26"/>
    </location>
</feature>
<feature type="region of interest" description="G2" evidence="1">
    <location>
        <begin position="60"/>
        <end position="64"/>
    </location>
</feature>
<feature type="region of interest" description="G3" evidence="1">
    <location>
        <begin position="81"/>
        <end position="84"/>
    </location>
</feature>
<feature type="region of interest" description="G4" evidence="1">
    <location>
        <begin position="136"/>
        <end position="139"/>
    </location>
</feature>
<feature type="region of interest" description="G5" evidence="1">
    <location>
        <begin position="173"/>
        <end position="175"/>
    </location>
</feature>
<feature type="binding site" evidence="2">
    <location>
        <begin position="19"/>
        <end position="26"/>
    </location>
    <ligand>
        <name>GTP</name>
        <dbReference type="ChEBI" id="CHEBI:37565"/>
    </ligand>
</feature>
<feature type="binding site" evidence="2">
    <location>
        <position position="26"/>
    </location>
    <ligand>
        <name>Mg(2+)</name>
        <dbReference type="ChEBI" id="CHEBI:18420"/>
    </ligand>
</feature>
<feature type="binding site" evidence="2">
    <location>
        <begin position="81"/>
        <end position="85"/>
    </location>
    <ligand>
        <name>GTP</name>
        <dbReference type="ChEBI" id="CHEBI:37565"/>
    </ligand>
</feature>
<feature type="binding site" evidence="2">
    <location>
        <begin position="136"/>
        <end position="139"/>
    </location>
    <ligand>
        <name>GTP</name>
        <dbReference type="ChEBI" id="CHEBI:37565"/>
    </ligand>
</feature>
<keyword id="KW-0963">Cytoplasm</keyword>
<keyword id="KW-0251">Elongation factor</keyword>
<keyword id="KW-0342">GTP-binding</keyword>
<keyword id="KW-0378">Hydrolase</keyword>
<keyword id="KW-0460">Magnesium</keyword>
<keyword id="KW-0479">Metal-binding</keyword>
<keyword id="KW-0547">Nucleotide-binding</keyword>
<keyword id="KW-0648">Protein biosynthesis</keyword>
<proteinExistence type="inferred from homology"/>
<evidence type="ECO:0000250" key="1"/>
<evidence type="ECO:0000255" key="2">
    <source>
        <dbReference type="HAMAP-Rule" id="MF_00118"/>
    </source>
</evidence>
<dbReference type="EC" id="3.6.5.3" evidence="2"/>
<dbReference type="EMBL" id="X67059">
    <property type="protein sequence ID" value="CAA47444.1"/>
    <property type="molecule type" value="Genomic_DNA"/>
</dbReference>
<dbReference type="PIR" id="S25547">
    <property type="entry name" value="S25547"/>
</dbReference>
<dbReference type="SMR" id="P29544"/>
<dbReference type="GO" id="GO:0005829">
    <property type="term" value="C:cytosol"/>
    <property type="evidence" value="ECO:0007669"/>
    <property type="project" value="TreeGrafter"/>
</dbReference>
<dbReference type="GO" id="GO:0005525">
    <property type="term" value="F:GTP binding"/>
    <property type="evidence" value="ECO:0007669"/>
    <property type="project" value="UniProtKB-UniRule"/>
</dbReference>
<dbReference type="GO" id="GO:0003924">
    <property type="term" value="F:GTPase activity"/>
    <property type="evidence" value="ECO:0007669"/>
    <property type="project" value="InterPro"/>
</dbReference>
<dbReference type="GO" id="GO:0003746">
    <property type="term" value="F:translation elongation factor activity"/>
    <property type="evidence" value="ECO:0007669"/>
    <property type="project" value="UniProtKB-UniRule"/>
</dbReference>
<dbReference type="CDD" id="cd01884">
    <property type="entry name" value="EF_Tu"/>
    <property type="match status" value="1"/>
</dbReference>
<dbReference type="CDD" id="cd03707">
    <property type="entry name" value="EFTU_III"/>
    <property type="match status" value="1"/>
</dbReference>
<dbReference type="FunFam" id="2.40.30.10:FF:000085">
    <property type="entry name" value="Elongation factor Tu"/>
    <property type="match status" value="1"/>
</dbReference>
<dbReference type="FunFam" id="3.40.50.300:FF:000576">
    <property type="entry name" value="Elongation factor Tu"/>
    <property type="match status" value="1"/>
</dbReference>
<dbReference type="Gene3D" id="3.40.50.300">
    <property type="entry name" value="P-loop containing nucleotide triphosphate hydrolases"/>
    <property type="match status" value="1"/>
</dbReference>
<dbReference type="Gene3D" id="2.40.30.10">
    <property type="entry name" value="Translation factors"/>
    <property type="match status" value="2"/>
</dbReference>
<dbReference type="HAMAP" id="MF_00118_B">
    <property type="entry name" value="EF_Tu_B"/>
    <property type="match status" value="1"/>
</dbReference>
<dbReference type="InterPro" id="IPR041709">
    <property type="entry name" value="EF-Tu_GTP-bd"/>
</dbReference>
<dbReference type="InterPro" id="IPR050055">
    <property type="entry name" value="EF-Tu_GTPase"/>
</dbReference>
<dbReference type="InterPro" id="IPR004161">
    <property type="entry name" value="EFTu-like_2"/>
</dbReference>
<dbReference type="InterPro" id="IPR031157">
    <property type="entry name" value="G_TR_CS"/>
</dbReference>
<dbReference type="InterPro" id="IPR027417">
    <property type="entry name" value="P-loop_NTPase"/>
</dbReference>
<dbReference type="InterPro" id="IPR005225">
    <property type="entry name" value="Small_GTP-bd"/>
</dbReference>
<dbReference type="InterPro" id="IPR000795">
    <property type="entry name" value="T_Tr_GTP-bd_dom"/>
</dbReference>
<dbReference type="InterPro" id="IPR009000">
    <property type="entry name" value="Transl_B-barrel_sf"/>
</dbReference>
<dbReference type="InterPro" id="IPR009001">
    <property type="entry name" value="Transl_elong_EF1A/Init_IF2_C"/>
</dbReference>
<dbReference type="InterPro" id="IPR004541">
    <property type="entry name" value="Transl_elong_EFTu/EF1A_bac/org"/>
</dbReference>
<dbReference type="InterPro" id="IPR004160">
    <property type="entry name" value="Transl_elong_EFTu/EF1A_C"/>
</dbReference>
<dbReference type="NCBIfam" id="TIGR00485">
    <property type="entry name" value="EF-Tu"/>
    <property type="match status" value="1"/>
</dbReference>
<dbReference type="NCBIfam" id="NF000766">
    <property type="entry name" value="PRK00049.1"/>
    <property type="match status" value="1"/>
</dbReference>
<dbReference type="NCBIfam" id="NF009372">
    <property type="entry name" value="PRK12735.1"/>
    <property type="match status" value="1"/>
</dbReference>
<dbReference type="NCBIfam" id="NF009373">
    <property type="entry name" value="PRK12736.1"/>
    <property type="match status" value="1"/>
</dbReference>
<dbReference type="NCBIfam" id="TIGR00231">
    <property type="entry name" value="small_GTP"/>
    <property type="match status" value="1"/>
</dbReference>
<dbReference type="PANTHER" id="PTHR43721:SF22">
    <property type="entry name" value="ELONGATION FACTOR TU, MITOCHONDRIAL"/>
    <property type="match status" value="1"/>
</dbReference>
<dbReference type="PANTHER" id="PTHR43721">
    <property type="entry name" value="ELONGATION FACTOR TU-RELATED"/>
    <property type="match status" value="1"/>
</dbReference>
<dbReference type="Pfam" id="PF00009">
    <property type="entry name" value="GTP_EFTU"/>
    <property type="match status" value="1"/>
</dbReference>
<dbReference type="Pfam" id="PF03144">
    <property type="entry name" value="GTP_EFTU_D2"/>
    <property type="match status" value="1"/>
</dbReference>
<dbReference type="Pfam" id="PF03143">
    <property type="entry name" value="GTP_EFTU_D3"/>
    <property type="match status" value="1"/>
</dbReference>
<dbReference type="PRINTS" id="PR00315">
    <property type="entry name" value="ELONGATNFCT"/>
</dbReference>
<dbReference type="SUPFAM" id="SSF50465">
    <property type="entry name" value="EF-Tu/eEF-1alpha/eIF2-gamma C-terminal domain"/>
    <property type="match status" value="1"/>
</dbReference>
<dbReference type="SUPFAM" id="SSF52540">
    <property type="entry name" value="P-loop containing nucleoside triphosphate hydrolases"/>
    <property type="match status" value="1"/>
</dbReference>
<dbReference type="SUPFAM" id="SSF50447">
    <property type="entry name" value="Translation proteins"/>
    <property type="match status" value="1"/>
</dbReference>
<dbReference type="PROSITE" id="PS00301">
    <property type="entry name" value="G_TR_1"/>
    <property type="match status" value="1"/>
</dbReference>
<dbReference type="PROSITE" id="PS51722">
    <property type="entry name" value="G_TR_2"/>
    <property type="match status" value="1"/>
</dbReference>
<accession>P29544</accession>
<sequence length="389" mass="41171">MSKTAYVRTKPHLNIGTMGHVDHGKTTLTAAITKVLAERGSGTFVPFDRIDRAPEEAARGITINIAHVEYETDTRHYAHVDMPGHADYVKNMVTGAAQLDGAILVVSALDGIMPQTAEHVLLARQVGVDHIVVALNKADAGDEELTDLVELEVRDLLSEHGYGGDGAPVVRVSGLKALEGDPKWTASIEALLDAVDTYVPMPERYVDAPFLLPVENVLTITGRGTVVTGAVERGTVRVGNRVEVLGAGLETVVTGLETFGKPMDEAQAGDNVALLLRGVPRDAVRRGHVVAAPGSVVPRSRFSAQVYVLSAREGGRTTPVTSGYRPQFYIRTADVVGDVDLGEVGVARPGETVSMIVELGREVPLEPGLGFAIREGGRTVGAGTVTALV</sequence>